<comment type="function">
    <text evidence="1">Component of the INA complex (INAC) that promotes the biogenesis of mitochondrial F(1)F(0)-ATP synthase. INAC facilitates the assembly of the peripheral stalk and promotes the assembly of the catalytic F(1)-domain with the membrane-embedded F(0)-domain.</text>
</comment>
<comment type="subunit">
    <text evidence="1">Component of the inner membrane assembly (INA) complex, composed of INA17 and INA22. Interacts with a subset of F(1)F(0)-ATP synthase subunits of the F(1)-domain and the peripheral stalk.</text>
</comment>
<comment type="subcellular location">
    <subcellularLocation>
        <location evidence="1">Mitochondrion inner membrane</location>
        <topology evidence="2">Single-pass membrane protein</topology>
    </subcellularLocation>
</comment>
<comment type="similarity">
    <text evidence="3">Belongs to the INA17 family.</text>
</comment>
<evidence type="ECO:0000250" key="1">
    <source>
        <dbReference type="UniProtKB" id="Q02888"/>
    </source>
</evidence>
<evidence type="ECO:0000255" key="2"/>
<evidence type="ECO:0000305" key="3"/>
<accession>B5VT63</accession>
<organism>
    <name type="scientific">Saccharomyces cerevisiae (strain AWRI1631)</name>
    <name type="common">Baker's yeast</name>
    <dbReference type="NCBI Taxonomy" id="545124"/>
    <lineage>
        <taxon>Eukaryota</taxon>
        <taxon>Fungi</taxon>
        <taxon>Dikarya</taxon>
        <taxon>Ascomycota</taxon>
        <taxon>Saccharomycotina</taxon>
        <taxon>Saccharomycetes</taxon>
        <taxon>Saccharomycetales</taxon>
        <taxon>Saccharomycetaceae</taxon>
        <taxon>Saccharomyces</taxon>
    </lineage>
</organism>
<gene>
    <name evidence="1" type="primary">INA17</name>
    <name evidence="1" type="synonym">AIM43</name>
    <name evidence="1" type="synonym">FMP14</name>
    <name type="ORF">AWRI1631_161620</name>
</gene>
<protein>
    <recommendedName>
        <fullName evidence="1">Inner membrane assembly complex subunit 17</fullName>
    </recommendedName>
    <alternativeName>
        <fullName evidence="1">Altered inheritance of mitochondria protein 43</fullName>
    </alternativeName>
    <alternativeName>
        <fullName evidence="1">Found in mitochondrial proteome protein 14</fullName>
    </alternativeName>
</protein>
<feature type="transit peptide" description="Mitochondrion" evidence="2">
    <location>
        <begin position="1"/>
        <end position="45"/>
    </location>
</feature>
<feature type="chain" id="PRO_0000399884" description="Inner membrane assembly complex subunit 17" evidence="2">
    <location>
        <begin position="46"/>
        <end position="182"/>
    </location>
</feature>
<feature type="topological domain" description="Mitochondrial matrix" evidence="1">
    <location>
        <begin position="46"/>
        <end position="107"/>
    </location>
</feature>
<feature type="transmembrane region" description="Helical" evidence="2">
    <location>
        <begin position="108"/>
        <end position="127"/>
    </location>
</feature>
<feature type="topological domain" description="Mitochondrial intermembrane" evidence="1">
    <location>
        <begin position="128"/>
        <end position="182"/>
    </location>
</feature>
<feature type="coiled-coil region" evidence="2">
    <location>
        <begin position="128"/>
        <end position="158"/>
    </location>
</feature>
<sequence>MLKRRSNALITLSRTKLFPITTVAYYHRRLLNQQRRAVSTSPKKEIKSLEDLANLDSLDGVDTELIRDLINEHTTKLNIKKELDMLKKFSQEEESGHEIPVKRFIRPLWMFILMGSSVYLLLHFSWWKLEHEERESQLKKEVEILEHQLNELIVQDKTHNTSRGKGSNESTHMKPWYRRWFW</sequence>
<name>INA17_YEAS6</name>
<reference key="1">
    <citation type="journal article" date="2008" name="FEMS Yeast Res.">
        <title>Comparative genome analysis of a Saccharomyces cerevisiae wine strain.</title>
        <authorList>
            <person name="Borneman A.R."/>
            <person name="Forgan A.H."/>
            <person name="Pretorius I.S."/>
            <person name="Chambers P.J."/>
        </authorList>
    </citation>
    <scope>NUCLEOTIDE SEQUENCE [LARGE SCALE GENOMIC DNA]</scope>
    <source>
        <strain>AWRI1631</strain>
    </source>
</reference>
<dbReference type="EMBL" id="ABSV01002338">
    <property type="protein sequence ID" value="EDZ68881.1"/>
    <property type="molecule type" value="Genomic_DNA"/>
</dbReference>
<dbReference type="SMR" id="B5VT63"/>
<dbReference type="Proteomes" id="UP000008988">
    <property type="component" value="Unassembled WGS sequence"/>
</dbReference>
<dbReference type="GO" id="GO:0005743">
    <property type="term" value="C:mitochondrial inner membrane"/>
    <property type="evidence" value="ECO:0007669"/>
    <property type="project" value="UniProtKB-SubCell"/>
</dbReference>
<proteinExistence type="inferred from homology"/>
<keyword id="KW-0143">Chaperone</keyword>
<keyword id="KW-0175">Coiled coil</keyword>
<keyword id="KW-0472">Membrane</keyword>
<keyword id="KW-0496">Mitochondrion</keyword>
<keyword id="KW-0999">Mitochondrion inner membrane</keyword>
<keyword id="KW-0809">Transit peptide</keyword>
<keyword id="KW-0812">Transmembrane</keyword>
<keyword id="KW-1133">Transmembrane helix</keyword>